<dbReference type="EC" id="4.2.3.15" evidence="4"/>
<dbReference type="EMBL" id="EU760349">
    <property type="protein sequence ID" value="ACI32638.1"/>
    <property type="molecule type" value="mRNA"/>
</dbReference>
<dbReference type="SMR" id="B6SCF4"/>
<dbReference type="UniPathway" id="UPA00213"/>
<dbReference type="GO" id="GO:0031969">
    <property type="term" value="C:chloroplast membrane"/>
    <property type="evidence" value="ECO:0007669"/>
    <property type="project" value="UniProtKB-SubCell"/>
</dbReference>
<dbReference type="GO" id="GO:0000287">
    <property type="term" value="F:magnesium ion binding"/>
    <property type="evidence" value="ECO:0007669"/>
    <property type="project" value="InterPro"/>
</dbReference>
<dbReference type="GO" id="GO:0050551">
    <property type="term" value="F:myrcene synthase activity"/>
    <property type="evidence" value="ECO:0007669"/>
    <property type="project" value="UniProtKB-EC"/>
</dbReference>
<dbReference type="GO" id="GO:0016102">
    <property type="term" value="P:diterpenoid biosynthetic process"/>
    <property type="evidence" value="ECO:0007669"/>
    <property type="project" value="InterPro"/>
</dbReference>
<dbReference type="CDD" id="cd00684">
    <property type="entry name" value="Terpene_cyclase_plant_C1"/>
    <property type="match status" value="1"/>
</dbReference>
<dbReference type="FunFam" id="1.10.600.10:FF:000007">
    <property type="entry name" value="Isoprene synthase, chloroplastic"/>
    <property type="match status" value="1"/>
</dbReference>
<dbReference type="FunFam" id="1.50.10.130:FF:000001">
    <property type="entry name" value="Isoprene synthase, chloroplastic"/>
    <property type="match status" value="1"/>
</dbReference>
<dbReference type="Gene3D" id="1.10.600.10">
    <property type="entry name" value="Farnesyl Diphosphate Synthase"/>
    <property type="match status" value="1"/>
</dbReference>
<dbReference type="Gene3D" id="1.50.10.130">
    <property type="entry name" value="Terpene synthase, N-terminal domain"/>
    <property type="match status" value="1"/>
</dbReference>
<dbReference type="InterPro" id="IPR008949">
    <property type="entry name" value="Isoprenoid_synthase_dom_sf"/>
</dbReference>
<dbReference type="InterPro" id="IPR034741">
    <property type="entry name" value="Terpene_cyclase-like_1_C"/>
</dbReference>
<dbReference type="InterPro" id="IPR044814">
    <property type="entry name" value="Terpene_cyclase_plant_C1"/>
</dbReference>
<dbReference type="InterPro" id="IPR001906">
    <property type="entry name" value="Terpene_synth_N"/>
</dbReference>
<dbReference type="InterPro" id="IPR036965">
    <property type="entry name" value="Terpene_synth_N_sf"/>
</dbReference>
<dbReference type="InterPro" id="IPR050148">
    <property type="entry name" value="Terpene_synthase-like"/>
</dbReference>
<dbReference type="InterPro" id="IPR005630">
    <property type="entry name" value="Terpene_synthase_metal-bd"/>
</dbReference>
<dbReference type="InterPro" id="IPR008930">
    <property type="entry name" value="Terpenoid_cyclase/PrenylTrfase"/>
</dbReference>
<dbReference type="PANTHER" id="PTHR31225">
    <property type="entry name" value="OS04G0344100 PROTEIN-RELATED"/>
    <property type="match status" value="1"/>
</dbReference>
<dbReference type="PANTHER" id="PTHR31225:SF9">
    <property type="entry name" value="TERPENE SYNTHASE 10"/>
    <property type="match status" value="1"/>
</dbReference>
<dbReference type="Pfam" id="PF01397">
    <property type="entry name" value="Terpene_synth"/>
    <property type="match status" value="1"/>
</dbReference>
<dbReference type="Pfam" id="PF03936">
    <property type="entry name" value="Terpene_synth_C"/>
    <property type="match status" value="1"/>
</dbReference>
<dbReference type="SFLD" id="SFLDS00005">
    <property type="entry name" value="Isoprenoid_Synthase_Type_I"/>
    <property type="match status" value="1"/>
</dbReference>
<dbReference type="SFLD" id="SFLDG01019">
    <property type="entry name" value="Terpene_Cyclase_Like_1_C_Termi"/>
    <property type="match status" value="1"/>
</dbReference>
<dbReference type="SUPFAM" id="SSF48239">
    <property type="entry name" value="Terpenoid cyclases/Protein prenyltransferases"/>
    <property type="match status" value="1"/>
</dbReference>
<dbReference type="SUPFAM" id="SSF48576">
    <property type="entry name" value="Terpenoid synthases"/>
    <property type="match status" value="1"/>
</dbReference>
<comment type="function">
    <text evidence="4">Monoterpene synthase that catalyzes the formation of myrcene. Can use geranyl diphosphate as substrate, but not farnesyl diphosphate or geranylgeranyl diphosphate.</text>
</comment>
<comment type="catalytic activity">
    <reaction evidence="4">
        <text>(2E)-geranyl diphosphate = beta-myrcene + diphosphate</text>
        <dbReference type="Rhea" id="RHEA:16965"/>
        <dbReference type="ChEBI" id="CHEBI:17221"/>
        <dbReference type="ChEBI" id="CHEBI:33019"/>
        <dbReference type="ChEBI" id="CHEBI:58057"/>
        <dbReference type="EC" id="4.2.3.15"/>
    </reaction>
</comment>
<comment type="cofactor">
    <cofactor evidence="1">
        <name>Mg(2+)</name>
        <dbReference type="ChEBI" id="CHEBI:18420"/>
    </cofactor>
    <cofactor evidence="1">
        <name>Mn(2+)</name>
        <dbReference type="ChEBI" id="CHEBI:29035"/>
    </cofactor>
    <text evidence="1">Binds 3 Mg(2+) or Mn(2+) ions per subunit.</text>
</comment>
<comment type="biophysicochemical properties">
    <kinetics>
        <KM evidence="4">7.65 uM for geranyl diphosphate</KM>
    </kinetics>
</comment>
<comment type="pathway">
    <text>Secondary metabolite biosynthesis; terpenoid biosynthesis.</text>
</comment>
<comment type="subcellular location">
    <subcellularLocation>
        <location evidence="3">Plastid</location>
        <location evidence="3">Chloroplast membrane</location>
        <topology evidence="3">Single-pass membrane protein</topology>
    </subcellularLocation>
</comment>
<comment type="tissue specificity">
    <text evidence="4">Expressed in trichomes.</text>
</comment>
<comment type="domain">
    <text evidence="2">The Asp-Asp-Xaa-Xaa-Asp/Glu (DDXXD/E) motif is important for the catalytic activity, presumably through binding to Mg(2+).</text>
</comment>
<comment type="similarity">
    <text evidence="6">Belongs to the terpene synthase family. Tpsb subfamily.</text>
</comment>
<proteinExistence type="evidence at protein level"/>
<feature type="transit peptide" description="Chloroplast" evidence="3">
    <location>
        <begin position="1"/>
        <end position="46"/>
    </location>
</feature>
<feature type="chain" id="PRO_0000439241" description="Myrcene synthase, chloroplastic" evidence="3">
    <location>
        <begin position="47"/>
        <end position="613"/>
    </location>
</feature>
<feature type="transmembrane region" description="Helical" evidence="3">
    <location>
        <begin position="455"/>
        <end position="475"/>
    </location>
</feature>
<feature type="short sequence motif" description="DDXXD motif" evidence="6">
    <location>
        <begin position="361"/>
        <end position="365"/>
    </location>
</feature>
<feature type="binding site" evidence="2">
    <location>
        <position position="324"/>
    </location>
    <ligand>
        <name>(2E)-geranyl diphosphate</name>
        <dbReference type="ChEBI" id="CHEBI:58057"/>
    </ligand>
</feature>
<feature type="binding site" evidence="2">
    <location>
        <position position="361"/>
    </location>
    <ligand>
        <name>(2E)-geranyl diphosphate</name>
        <dbReference type="ChEBI" id="CHEBI:58057"/>
    </ligand>
</feature>
<feature type="binding site" evidence="2">
    <location>
        <position position="361"/>
    </location>
    <ligand>
        <name>Mg(2+)</name>
        <dbReference type="ChEBI" id="CHEBI:18420"/>
        <label>1</label>
    </ligand>
</feature>
<feature type="binding site" evidence="2">
    <location>
        <position position="361"/>
    </location>
    <ligand>
        <name>Mg(2+)</name>
        <dbReference type="ChEBI" id="CHEBI:18420"/>
        <label>2</label>
    </ligand>
</feature>
<feature type="binding site" evidence="2">
    <location>
        <position position="365"/>
    </location>
    <ligand>
        <name>(2E)-geranyl diphosphate</name>
        <dbReference type="ChEBI" id="CHEBI:58057"/>
    </ligand>
</feature>
<feature type="binding site" evidence="2">
    <location>
        <position position="365"/>
    </location>
    <ligand>
        <name>Mg(2+)</name>
        <dbReference type="ChEBI" id="CHEBI:18420"/>
        <label>1</label>
    </ligand>
</feature>
<feature type="binding site" evidence="2">
    <location>
        <position position="365"/>
    </location>
    <ligand>
        <name>Mg(2+)</name>
        <dbReference type="ChEBI" id="CHEBI:18420"/>
        <label>2</label>
    </ligand>
</feature>
<feature type="binding site" evidence="2">
    <location>
        <position position="503"/>
    </location>
    <ligand>
        <name>(2E)-geranyl diphosphate</name>
        <dbReference type="ChEBI" id="CHEBI:58057"/>
    </ligand>
</feature>
<feature type="binding site" evidence="2">
    <location>
        <position position="506"/>
    </location>
    <ligand>
        <name>(2E)-geranyl diphosphate</name>
        <dbReference type="ChEBI" id="CHEBI:58057"/>
    </ligand>
</feature>
<feature type="binding site" evidence="2">
    <location>
        <position position="506"/>
    </location>
    <ligand>
        <name>Mg(2+)</name>
        <dbReference type="ChEBI" id="CHEBI:18420"/>
        <label>3</label>
    </ligand>
</feature>
<feature type="binding site" evidence="2">
    <location>
        <position position="510"/>
    </location>
    <ligand>
        <name>Mg(2+)</name>
        <dbReference type="ChEBI" id="CHEBI:18420"/>
        <label>3</label>
    </ligand>
</feature>
<feature type="binding site" evidence="2">
    <location>
        <position position="514"/>
    </location>
    <ligand>
        <name>Mg(2+)</name>
        <dbReference type="ChEBI" id="CHEBI:18420"/>
        <label>3</label>
    </ligand>
</feature>
<organism>
    <name type="scientific">Humulus lupulus</name>
    <name type="common">European hop</name>
    <dbReference type="NCBI Taxonomy" id="3486"/>
    <lineage>
        <taxon>Eukaryota</taxon>
        <taxon>Viridiplantae</taxon>
        <taxon>Streptophyta</taxon>
        <taxon>Embryophyta</taxon>
        <taxon>Tracheophyta</taxon>
        <taxon>Spermatophyta</taxon>
        <taxon>Magnoliopsida</taxon>
        <taxon>eudicotyledons</taxon>
        <taxon>Gunneridae</taxon>
        <taxon>Pentapetalae</taxon>
        <taxon>rosids</taxon>
        <taxon>fabids</taxon>
        <taxon>Rosales</taxon>
        <taxon>Cannabaceae</taxon>
        <taxon>Humulus</taxon>
    </lineage>
</organism>
<reference key="1">
    <citation type="journal article" date="2008" name="Plant Physiol.">
        <title>Terpene biosynthesis in glandular trichomes of hop.</title>
        <authorList>
            <person name="Wang G."/>
            <person name="Tian L."/>
            <person name="Aziz N."/>
            <person name="Broun P."/>
            <person name="Dai X."/>
            <person name="He J."/>
            <person name="King A."/>
            <person name="Zhao P.X."/>
            <person name="Dixon R.A."/>
        </authorList>
    </citation>
    <scope>NUCLEOTIDE SEQUENCE [MRNA]</scope>
    <scope>FUNCTION</scope>
    <scope>CATALYTIC ACTIVITY</scope>
    <scope>BIOPHYSICOCHEMICAL PROPERTIES</scope>
    <scope>SUBSTRATE SPECIFICITY</scope>
    <scope>TISSUE SPECIFICITY</scope>
    <source>
        <tissue>Lupulin gland</tissue>
    </source>
</reference>
<name>MTS2_HUMLU</name>
<evidence type="ECO:0000250" key="1">
    <source>
        <dbReference type="UniProtKB" id="A0A1C9J6A7"/>
    </source>
</evidence>
<evidence type="ECO:0000250" key="2">
    <source>
        <dbReference type="UniProtKB" id="Q40577"/>
    </source>
</evidence>
<evidence type="ECO:0000255" key="3"/>
<evidence type="ECO:0000269" key="4">
    <source>
    </source>
</evidence>
<evidence type="ECO:0000303" key="5">
    <source>
    </source>
</evidence>
<evidence type="ECO:0000305" key="6"/>
<accession>B6SCF4</accession>
<sequence length="613" mass="72214">MQCMAVHQFAPLLSLLNCSRISSDFGRLFTPKTSTKSRSSTCHPIQCTVVNNTDRRSANYEPSIWSFDYIQSLTSQYKGKSYSSRLNELKKEVKMMEDGTKECLAQLDLIDTLQRLGISYHFEDEINTILKRKYINIQNNINHNYNLYSTALQFRLLRQHGYLVTQEVFNAFKDETGKFKTYLSDDIMGVLSLYEASFYAMKHENVLEEARVFSTECLKEYMMKMEQNKVLLDHDLDHNDNFNVNHHVLIINHALELPLHWRITRSEARWFIDVYEKKQDMDSTLLEFAKLDFNMVQSTHQEDLKHLSRWWRHSKLGEKLNFARDRLMEAFLWEVGLKFEPEFSYFKRISARLFVLITIIDDIYDVYGTLEELELFTKAVERWDVNAINELPEYMKMPFLVLHNTINEMAFDVLGDQNFLNIEYLKKSLVDLCKCYLQEAKWYYSGYQPTLQEYIEMAWLSIGGPVILVHAYFCFTNPITKESMKFFTEGYPNIIQQSCLIVRLADDFGTFSDELNRGDVPKSIQCYMYDTGASEDEAREHIKFLICETWKDMNKNDEDNSCFSETFVEVCKNLARTALFMYQYGDGHASQNCLSKERIFALIINPINFHERK</sequence>
<keyword id="KW-0150">Chloroplast</keyword>
<keyword id="KW-0456">Lyase</keyword>
<keyword id="KW-0460">Magnesium</keyword>
<keyword id="KW-0472">Membrane</keyword>
<keyword id="KW-0479">Metal-binding</keyword>
<keyword id="KW-0934">Plastid</keyword>
<keyword id="KW-0809">Transit peptide</keyword>
<keyword id="KW-0812">Transmembrane</keyword>
<keyword id="KW-1133">Transmembrane helix</keyword>
<protein>
    <recommendedName>
        <fullName evidence="6">Myrcene synthase, chloroplastic</fullName>
        <ecNumber evidence="4">4.2.3.15</ecNumber>
    </recommendedName>
    <alternativeName>
        <fullName evidence="5">Monoterpene synthase MTS2</fullName>
        <shortName evidence="5">HlMTS2</shortName>
    </alternativeName>
</protein>